<keyword id="KW-0413">Isomerase</keyword>
<keyword id="KW-0460">Magnesium</keyword>
<keyword id="KW-0479">Metal-binding</keyword>
<keyword id="KW-0597">Phosphoprotein</keyword>
<keyword id="KW-1185">Reference proteome</keyword>
<name>GLMM_NITWN</name>
<protein>
    <recommendedName>
        <fullName evidence="1">Phosphoglucosamine mutase</fullName>
        <ecNumber evidence="1">5.4.2.10</ecNumber>
    </recommendedName>
</protein>
<evidence type="ECO:0000255" key="1">
    <source>
        <dbReference type="HAMAP-Rule" id="MF_01554"/>
    </source>
</evidence>
<organism>
    <name type="scientific">Nitrobacter winogradskyi (strain ATCC 25391 / DSM 10237 / CIP 104748 / NCIMB 11846 / Nb-255)</name>
    <dbReference type="NCBI Taxonomy" id="323098"/>
    <lineage>
        <taxon>Bacteria</taxon>
        <taxon>Pseudomonadati</taxon>
        <taxon>Pseudomonadota</taxon>
        <taxon>Alphaproteobacteria</taxon>
        <taxon>Hyphomicrobiales</taxon>
        <taxon>Nitrobacteraceae</taxon>
        <taxon>Nitrobacter</taxon>
    </lineage>
</organism>
<gene>
    <name evidence="1" type="primary">glmM</name>
    <name type="ordered locus">Nwi_2973</name>
</gene>
<proteinExistence type="inferred from homology"/>
<comment type="function">
    <text evidence="1">Catalyzes the conversion of glucosamine-6-phosphate to glucosamine-1-phosphate.</text>
</comment>
<comment type="catalytic activity">
    <reaction evidence="1">
        <text>alpha-D-glucosamine 1-phosphate = D-glucosamine 6-phosphate</text>
        <dbReference type="Rhea" id="RHEA:23424"/>
        <dbReference type="ChEBI" id="CHEBI:58516"/>
        <dbReference type="ChEBI" id="CHEBI:58725"/>
        <dbReference type="EC" id="5.4.2.10"/>
    </reaction>
</comment>
<comment type="cofactor">
    <cofactor evidence="1">
        <name>Mg(2+)</name>
        <dbReference type="ChEBI" id="CHEBI:18420"/>
    </cofactor>
    <text evidence="1">Binds 1 Mg(2+) ion per subunit.</text>
</comment>
<comment type="PTM">
    <text evidence="1">Activated by phosphorylation.</text>
</comment>
<comment type="similarity">
    <text evidence="1">Belongs to the phosphohexose mutase family.</text>
</comment>
<accession>Q3SNB8</accession>
<reference key="1">
    <citation type="journal article" date="2006" name="Appl. Environ. Microbiol.">
        <title>Genome sequence of the chemolithoautotrophic nitrite-oxidizing bacterium Nitrobacter winogradskyi Nb-255.</title>
        <authorList>
            <person name="Starkenburg S.R."/>
            <person name="Chain P.S.G."/>
            <person name="Sayavedra-Soto L.A."/>
            <person name="Hauser L."/>
            <person name="Land M.L."/>
            <person name="Larimer F.W."/>
            <person name="Malfatti S.A."/>
            <person name="Klotz M.G."/>
            <person name="Bottomley P.J."/>
            <person name="Arp D.J."/>
            <person name="Hickey W.J."/>
        </authorList>
    </citation>
    <scope>NUCLEOTIDE SEQUENCE [LARGE SCALE GENOMIC DNA]</scope>
    <source>
        <strain>ATCC 25391 / DSM 10237 / CIP 104748 / NCIMB 11846 / Nb-255</strain>
    </source>
</reference>
<dbReference type="EC" id="5.4.2.10" evidence="1"/>
<dbReference type="EMBL" id="CP000115">
    <property type="protein sequence ID" value="ABA06223.1"/>
    <property type="molecule type" value="Genomic_DNA"/>
</dbReference>
<dbReference type="RefSeq" id="WP_011316145.1">
    <property type="nucleotide sequence ID" value="NC_007406.1"/>
</dbReference>
<dbReference type="SMR" id="Q3SNB8"/>
<dbReference type="STRING" id="323098.Nwi_2973"/>
<dbReference type="KEGG" id="nwi:Nwi_2973"/>
<dbReference type="eggNOG" id="COG1109">
    <property type="taxonomic scope" value="Bacteria"/>
</dbReference>
<dbReference type="HOGENOM" id="CLU_016950_7_0_5"/>
<dbReference type="OrthoDB" id="9803322at2"/>
<dbReference type="Proteomes" id="UP000002531">
    <property type="component" value="Chromosome"/>
</dbReference>
<dbReference type="GO" id="GO:0005829">
    <property type="term" value="C:cytosol"/>
    <property type="evidence" value="ECO:0007669"/>
    <property type="project" value="TreeGrafter"/>
</dbReference>
<dbReference type="GO" id="GO:0000287">
    <property type="term" value="F:magnesium ion binding"/>
    <property type="evidence" value="ECO:0007669"/>
    <property type="project" value="UniProtKB-UniRule"/>
</dbReference>
<dbReference type="GO" id="GO:0008966">
    <property type="term" value="F:phosphoglucosamine mutase activity"/>
    <property type="evidence" value="ECO:0007669"/>
    <property type="project" value="UniProtKB-UniRule"/>
</dbReference>
<dbReference type="GO" id="GO:0004615">
    <property type="term" value="F:phosphomannomutase activity"/>
    <property type="evidence" value="ECO:0007669"/>
    <property type="project" value="TreeGrafter"/>
</dbReference>
<dbReference type="GO" id="GO:0005975">
    <property type="term" value="P:carbohydrate metabolic process"/>
    <property type="evidence" value="ECO:0007669"/>
    <property type="project" value="InterPro"/>
</dbReference>
<dbReference type="GO" id="GO:0009252">
    <property type="term" value="P:peptidoglycan biosynthetic process"/>
    <property type="evidence" value="ECO:0007669"/>
    <property type="project" value="TreeGrafter"/>
</dbReference>
<dbReference type="GO" id="GO:0006048">
    <property type="term" value="P:UDP-N-acetylglucosamine biosynthetic process"/>
    <property type="evidence" value="ECO:0007669"/>
    <property type="project" value="TreeGrafter"/>
</dbReference>
<dbReference type="CDD" id="cd05802">
    <property type="entry name" value="GlmM"/>
    <property type="match status" value="1"/>
</dbReference>
<dbReference type="FunFam" id="3.30.310.50:FF:000001">
    <property type="entry name" value="Phosphoglucosamine mutase"/>
    <property type="match status" value="1"/>
</dbReference>
<dbReference type="FunFam" id="3.40.120.10:FF:000001">
    <property type="entry name" value="Phosphoglucosamine mutase"/>
    <property type="match status" value="1"/>
</dbReference>
<dbReference type="FunFam" id="3.40.120.10:FF:000002">
    <property type="entry name" value="Phosphoglucosamine mutase"/>
    <property type="match status" value="1"/>
</dbReference>
<dbReference type="Gene3D" id="3.40.120.10">
    <property type="entry name" value="Alpha-D-Glucose-1,6-Bisphosphate, subunit A, domain 3"/>
    <property type="match status" value="3"/>
</dbReference>
<dbReference type="Gene3D" id="3.30.310.50">
    <property type="entry name" value="Alpha-D-phosphohexomutase, C-terminal domain"/>
    <property type="match status" value="1"/>
</dbReference>
<dbReference type="HAMAP" id="MF_01554_B">
    <property type="entry name" value="GlmM_B"/>
    <property type="match status" value="1"/>
</dbReference>
<dbReference type="InterPro" id="IPR005844">
    <property type="entry name" value="A-D-PHexomutase_a/b/a-I"/>
</dbReference>
<dbReference type="InterPro" id="IPR016055">
    <property type="entry name" value="A-D-PHexomutase_a/b/a-I/II/III"/>
</dbReference>
<dbReference type="InterPro" id="IPR005845">
    <property type="entry name" value="A-D-PHexomutase_a/b/a-II"/>
</dbReference>
<dbReference type="InterPro" id="IPR005846">
    <property type="entry name" value="A-D-PHexomutase_a/b/a-III"/>
</dbReference>
<dbReference type="InterPro" id="IPR005843">
    <property type="entry name" value="A-D-PHexomutase_C"/>
</dbReference>
<dbReference type="InterPro" id="IPR036900">
    <property type="entry name" value="A-D-PHexomutase_C_sf"/>
</dbReference>
<dbReference type="InterPro" id="IPR005841">
    <property type="entry name" value="Alpha-D-phosphohexomutase_SF"/>
</dbReference>
<dbReference type="InterPro" id="IPR006352">
    <property type="entry name" value="GlmM_bact"/>
</dbReference>
<dbReference type="InterPro" id="IPR050060">
    <property type="entry name" value="Phosphoglucosamine_mutase"/>
</dbReference>
<dbReference type="NCBIfam" id="TIGR01455">
    <property type="entry name" value="glmM"/>
    <property type="match status" value="1"/>
</dbReference>
<dbReference type="NCBIfam" id="NF008139">
    <property type="entry name" value="PRK10887.1"/>
    <property type="match status" value="1"/>
</dbReference>
<dbReference type="PANTHER" id="PTHR42946:SF1">
    <property type="entry name" value="PHOSPHOGLUCOMUTASE (ALPHA-D-GLUCOSE-1,6-BISPHOSPHATE-DEPENDENT)"/>
    <property type="match status" value="1"/>
</dbReference>
<dbReference type="PANTHER" id="PTHR42946">
    <property type="entry name" value="PHOSPHOHEXOSE MUTASE"/>
    <property type="match status" value="1"/>
</dbReference>
<dbReference type="Pfam" id="PF02878">
    <property type="entry name" value="PGM_PMM_I"/>
    <property type="match status" value="1"/>
</dbReference>
<dbReference type="Pfam" id="PF02879">
    <property type="entry name" value="PGM_PMM_II"/>
    <property type="match status" value="1"/>
</dbReference>
<dbReference type="Pfam" id="PF02880">
    <property type="entry name" value="PGM_PMM_III"/>
    <property type="match status" value="1"/>
</dbReference>
<dbReference type="Pfam" id="PF00408">
    <property type="entry name" value="PGM_PMM_IV"/>
    <property type="match status" value="1"/>
</dbReference>
<dbReference type="PRINTS" id="PR00509">
    <property type="entry name" value="PGMPMM"/>
</dbReference>
<dbReference type="SUPFAM" id="SSF55957">
    <property type="entry name" value="Phosphoglucomutase, C-terminal domain"/>
    <property type="match status" value="1"/>
</dbReference>
<dbReference type="SUPFAM" id="SSF53738">
    <property type="entry name" value="Phosphoglucomutase, first 3 domains"/>
    <property type="match status" value="3"/>
</dbReference>
<feature type="chain" id="PRO_0000147923" description="Phosphoglucosamine mutase">
    <location>
        <begin position="1"/>
        <end position="448"/>
    </location>
</feature>
<feature type="active site" description="Phosphoserine intermediate" evidence="1">
    <location>
        <position position="101"/>
    </location>
</feature>
<feature type="binding site" description="via phosphate group" evidence="1">
    <location>
        <position position="101"/>
    </location>
    <ligand>
        <name>Mg(2+)</name>
        <dbReference type="ChEBI" id="CHEBI:18420"/>
    </ligand>
</feature>
<feature type="binding site" evidence="1">
    <location>
        <position position="242"/>
    </location>
    <ligand>
        <name>Mg(2+)</name>
        <dbReference type="ChEBI" id="CHEBI:18420"/>
    </ligand>
</feature>
<feature type="binding site" evidence="1">
    <location>
        <position position="244"/>
    </location>
    <ligand>
        <name>Mg(2+)</name>
        <dbReference type="ChEBI" id="CHEBI:18420"/>
    </ligand>
</feature>
<feature type="binding site" evidence="1">
    <location>
        <position position="246"/>
    </location>
    <ligand>
        <name>Mg(2+)</name>
        <dbReference type="ChEBI" id="CHEBI:18420"/>
    </ligand>
</feature>
<feature type="modified residue" description="Phosphoserine" evidence="1">
    <location>
        <position position="101"/>
    </location>
</feature>
<sequence>MSRRYFGTDGIRGRANGLITPELAMKVGQAAGLVFQRGEHRHRVVIGKDTRLSGYMIEYALVAGFTSVGMDVLLLGPMPTPAVAMLTKSMRADLGVMISASHNLFEDNGIKMFGPRGFKLSDEVEKKIEKLLDENLDKKLAQSRNLGRARRIDGVHDRYIEFAKRTLPRELSLEGLRVVVDCAHGAAYKVVPEALWELGADVVPIGVEPDGLNINKECGSTAPEALCRKVREMRGDIGIALDGDADRVIIVDERGHVVDGDQLLAVIAESWKEDGRLTKPGIVATVMSNLGLERFLKDRDLSLVRTPVGDRYVLEQMLKQGYNLGGEQSGHIILSDYATTGDGFVSALQVLAVVQKLGRPVSQVCHKFEPLPQILKNFRYRNGKPLDRAEVKSAITAGEKRLNGHGRLLVRSSGTEPVIRVMGEGDDRILVEEVVDTIVSALGNPAVA</sequence>